<organism>
    <name type="scientific">Cupriavidus metallidurans (strain ATCC 43123 / DSM 2839 / NBRC 102507 / CH34)</name>
    <name type="common">Ralstonia metallidurans</name>
    <dbReference type="NCBI Taxonomy" id="266264"/>
    <lineage>
        <taxon>Bacteria</taxon>
        <taxon>Pseudomonadati</taxon>
        <taxon>Pseudomonadota</taxon>
        <taxon>Betaproteobacteria</taxon>
        <taxon>Burkholderiales</taxon>
        <taxon>Burkholderiaceae</taxon>
        <taxon>Cupriavidus</taxon>
    </lineage>
</organism>
<gene>
    <name evidence="1" type="primary">trpA</name>
    <name type="ordered locus">Rmet_2465</name>
</gene>
<comment type="function">
    <text evidence="1">The alpha subunit is responsible for the aldol cleavage of indoleglycerol phosphate to indole and glyceraldehyde 3-phosphate.</text>
</comment>
<comment type="catalytic activity">
    <reaction evidence="1">
        <text>(1S,2R)-1-C-(indol-3-yl)glycerol 3-phosphate + L-serine = D-glyceraldehyde 3-phosphate + L-tryptophan + H2O</text>
        <dbReference type="Rhea" id="RHEA:10532"/>
        <dbReference type="ChEBI" id="CHEBI:15377"/>
        <dbReference type="ChEBI" id="CHEBI:33384"/>
        <dbReference type="ChEBI" id="CHEBI:57912"/>
        <dbReference type="ChEBI" id="CHEBI:58866"/>
        <dbReference type="ChEBI" id="CHEBI:59776"/>
        <dbReference type="EC" id="4.2.1.20"/>
    </reaction>
</comment>
<comment type="pathway">
    <text evidence="1">Amino-acid biosynthesis; L-tryptophan biosynthesis; L-tryptophan from chorismate: step 5/5.</text>
</comment>
<comment type="subunit">
    <text evidence="1">Tetramer of two alpha and two beta chains.</text>
</comment>
<comment type="similarity">
    <text evidence="1">Belongs to the TrpA family.</text>
</comment>
<keyword id="KW-0028">Amino-acid biosynthesis</keyword>
<keyword id="KW-0057">Aromatic amino acid biosynthesis</keyword>
<keyword id="KW-0456">Lyase</keyword>
<keyword id="KW-1185">Reference proteome</keyword>
<keyword id="KW-0822">Tryptophan biosynthesis</keyword>
<evidence type="ECO:0000255" key="1">
    <source>
        <dbReference type="HAMAP-Rule" id="MF_00131"/>
    </source>
</evidence>
<dbReference type="EC" id="4.2.1.20" evidence="1"/>
<dbReference type="EMBL" id="CP000352">
    <property type="protein sequence ID" value="ABF09342.1"/>
    <property type="molecule type" value="Genomic_DNA"/>
</dbReference>
<dbReference type="RefSeq" id="WP_011517055.1">
    <property type="nucleotide sequence ID" value="NC_007973.1"/>
</dbReference>
<dbReference type="SMR" id="Q1LKI4"/>
<dbReference type="STRING" id="266264.Rmet_2465"/>
<dbReference type="KEGG" id="rme:Rmet_2465"/>
<dbReference type="eggNOG" id="COG0159">
    <property type="taxonomic scope" value="Bacteria"/>
</dbReference>
<dbReference type="HOGENOM" id="CLU_016734_0_0_4"/>
<dbReference type="UniPathway" id="UPA00035">
    <property type="reaction ID" value="UER00044"/>
</dbReference>
<dbReference type="Proteomes" id="UP000002429">
    <property type="component" value="Chromosome"/>
</dbReference>
<dbReference type="GO" id="GO:0005829">
    <property type="term" value="C:cytosol"/>
    <property type="evidence" value="ECO:0007669"/>
    <property type="project" value="TreeGrafter"/>
</dbReference>
<dbReference type="GO" id="GO:0004834">
    <property type="term" value="F:tryptophan synthase activity"/>
    <property type="evidence" value="ECO:0007669"/>
    <property type="project" value="UniProtKB-UniRule"/>
</dbReference>
<dbReference type="CDD" id="cd04724">
    <property type="entry name" value="Tryptophan_synthase_alpha"/>
    <property type="match status" value="1"/>
</dbReference>
<dbReference type="FunFam" id="3.20.20.70:FF:000037">
    <property type="entry name" value="Tryptophan synthase alpha chain"/>
    <property type="match status" value="1"/>
</dbReference>
<dbReference type="Gene3D" id="3.20.20.70">
    <property type="entry name" value="Aldolase class I"/>
    <property type="match status" value="1"/>
</dbReference>
<dbReference type="HAMAP" id="MF_00131">
    <property type="entry name" value="Trp_synth_alpha"/>
    <property type="match status" value="1"/>
</dbReference>
<dbReference type="InterPro" id="IPR013785">
    <property type="entry name" value="Aldolase_TIM"/>
</dbReference>
<dbReference type="InterPro" id="IPR011060">
    <property type="entry name" value="RibuloseP-bd_barrel"/>
</dbReference>
<dbReference type="InterPro" id="IPR018204">
    <property type="entry name" value="Trp_synthase_alpha_AS"/>
</dbReference>
<dbReference type="InterPro" id="IPR002028">
    <property type="entry name" value="Trp_synthase_suA"/>
</dbReference>
<dbReference type="NCBIfam" id="TIGR00262">
    <property type="entry name" value="trpA"/>
    <property type="match status" value="1"/>
</dbReference>
<dbReference type="PANTHER" id="PTHR43406:SF1">
    <property type="entry name" value="TRYPTOPHAN SYNTHASE ALPHA CHAIN, CHLOROPLASTIC"/>
    <property type="match status" value="1"/>
</dbReference>
<dbReference type="PANTHER" id="PTHR43406">
    <property type="entry name" value="TRYPTOPHAN SYNTHASE, ALPHA CHAIN"/>
    <property type="match status" value="1"/>
</dbReference>
<dbReference type="Pfam" id="PF00290">
    <property type="entry name" value="Trp_syntA"/>
    <property type="match status" value="1"/>
</dbReference>
<dbReference type="SUPFAM" id="SSF51366">
    <property type="entry name" value="Ribulose-phoshate binding barrel"/>
    <property type="match status" value="1"/>
</dbReference>
<dbReference type="PROSITE" id="PS00167">
    <property type="entry name" value="TRP_SYNTHASE_ALPHA"/>
    <property type="match status" value="1"/>
</dbReference>
<proteinExistence type="inferred from homology"/>
<name>TRPA_CUPMC</name>
<sequence>MSRIQKTFAALAAQQKKGLIPFITAGDPAPALTVDLMHALVAGGADVIELGVPFSDPMADGPVIQRASERALAQGVSLTQVLAWVTEFRKTNATTPVVLMGYANPIERMGEETFAKAASAAGVDGVLVVDYPPEECESFAALMRANQMDPIFLLAPTSTDDRIAAVAKVASGYLYYVSLTGVTGSATLDLESVAARLPLIKQHANLPVGVGFGIRDAQTARAIGSVADAVVIGSRLVQLLEDAPREKAVDSLRAFIADIRQALDA</sequence>
<reference key="1">
    <citation type="journal article" date="2010" name="PLoS ONE">
        <title>The complete genome sequence of Cupriavidus metallidurans strain CH34, a master survivalist in harsh and anthropogenic environments.</title>
        <authorList>
            <person name="Janssen P.J."/>
            <person name="Van Houdt R."/>
            <person name="Moors H."/>
            <person name="Monsieurs P."/>
            <person name="Morin N."/>
            <person name="Michaux A."/>
            <person name="Benotmane M.A."/>
            <person name="Leys N."/>
            <person name="Vallaeys T."/>
            <person name="Lapidus A."/>
            <person name="Monchy S."/>
            <person name="Medigue C."/>
            <person name="Taghavi S."/>
            <person name="McCorkle S."/>
            <person name="Dunn J."/>
            <person name="van der Lelie D."/>
            <person name="Mergeay M."/>
        </authorList>
    </citation>
    <scope>NUCLEOTIDE SEQUENCE [LARGE SCALE GENOMIC DNA]</scope>
    <source>
        <strain>ATCC 43123 / DSM 2839 / NBRC 102507 / CH34</strain>
    </source>
</reference>
<feature type="chain" id="PRO_1000018264" description="Tryptophan synthase alpha chain">
    <location>
        <begin position="1"/>
        <end position="265"/>
    </location>
</feature>
<feature type="active site" description="Proton acceptor" evidence="1">
    <location>
        <position position="49"/>
    </location>
</feature>
<feature type="active site" description="Proton acceptor" evidence="1">
    <location>
        <position position="60"/>
    </location>
</feature>
<accession>Q1LKI4</accession>
<protein>
    <recommendedName>
        <fullName evidence="1">Tryptophan synthase alpha chain</fullName>
        <ecNumber evidence="1">4.2.1.20</ecNumber>
    </recommendedName>
</protein>